<dbReference type="EC" id="2.3.2.27"/>
<dbReference type="EMBL" id="AY843515">
    <property type="protein sequence ID" value="AAV91986.1"/>
    <property type="molecule type" value="Genomic_DNA"/>
</dbReference>
<dbReference type="SMR" id="Q5D7I2"/>
<dbReference type="UniPathway" id="UPA00143"/>
<dbReference type="GO" id="GO:0005634">
    <property type="term" value="C:nucleus"/>
    <property type="evidence" value="ECO:0007669"/>
    <property type="project" value="UniProtKB-SubCell"/>
</dbReference>
<dbReference type="GO" id="GO:0000932">
    <property type="term" value="C:P-body"/>
    <property type="evidence" value="ECO:0000250"/>
    <property type="project" value="UniProtKB"/>
</dbReference>
<dbReference type="GO" id="GO:0038187">
    <property type="term" value="F:pattern recognition receptor activity"/>
    <property type="evidence" value="ECO:0000250"/>
    <property type="project" value="UniProtKB"/>
</dbReference>
<dbReference type="GO" id="GO:0004842">
    <property type="term" value="F:ubiquitin-protein transferase activity"/>
    <property type="evidence" value="ECO:0000250"/>
    <property type="project" value="UniProtKB"/>
</dbReference>
<dbReference type="GO" id="GO:0008270">
    <property type="term" value="F:zinc ion binding"/>
    <property type="evidence" value="ECO:0007669"/>
    <property type="project" value="UniProtKB-KW"/>
</dbReference>
<dbReference type="GO" id="GO:0002218">
    <property type="term" value="P:activation of innate immune response"/>
    <property type="evidence" value="ECO:0000250"/>
    <property type="project" value="UniProtKB"/>
</dbReference>
<dbReference type="GO" id="GO:0006914">
    <property type="term" value="P:autophagy"/>
    <property type="evidence" value="ECO:0007669"/>
    <property type="project" value="UniProtKB-KW"/>
</dbReference>
<dbReference type="GO" id="GO:0051607">
    <property type="term" value="P:defense response to virus"/>
    <property type="evidence" value="ECO:0007669"/>
    <property type="project" value="UniProtKB-KW"/>
</dbReference>
<dbReference type="GO" id="GO:0045087">
    <property type="term" value="P:innate immune response"/>
    <property type="evidence" value="ECO:0007669"/>
    <property type="project" value="UniProtKB-KW"/>
</dbReference>
<dbReference type="GO" id="GO:0043123">
    <property type="term" value="P:positive regulation of canonical NF-kappaB signal transduction"/>
    <property type="evidence" value="ECO:0000250"/>
    <property type="project" value="UniProtKB"/>
</dbReference>
<dbReference type="GO" id="GO:0043410">
    <property type="term" value="P:positive regulation of MAPK cascade"/>
    <property type="evidence" value="ECO:0000250"/>
    <property type="project" value="UniProtKB"/>
</dbReference>
<dbReference type="GO" id="GO:0051092">
    <property type="term" value="P:positive regulation of NF-kappaB transcription factor activity"/>
    <property type="evidence" value="ECO:0000250"/>
    <property type="project" value="UniProtKB"/>
</dbReference>
<dbReference type="GO" id="GO:0070534">
    <property type="term" value="P:protein K63-linked ubiquitination"/>
    <property type="evidence" value="ECO:0000250"/>
    <property type="project" value="UniProtKB"/>
</dbReference>
<dbReference type="GO" id="GO:0031664">
    <property type="term" value="P:regulation of lipopolysaccharide-mediated signaling pathway"/>
    <property type="evidence" value="ECO:0000250"/>
    <property type="project" value="UniProtKB"/>
</dbReference>
<dbReference type="CDD" id="cd19761">
    <property type="entry name" value="Bbox2_TRIM5-like"/>
    <property type="match status" value="1"/>
</dbReference>
<dbReference type="CDD" id="cd16591">
    <property type="entry name" value="RING-HC_TRIM5-like_C-IV"/>
    <property type="match status" value="1"/>
</dbReference>
<dbReference type="CDD" id="cd15822">
    <property type="entry name" value="SPRY_PRY_TRIM5"/>
    <property type="match status" value="1"/>
</dbReference>
<dbReference type="FunFam" id="2.60.120.920:FF:000023">
    <property type="entry name" value="Tripartite motif-containing 5 (Predicted)"/>
    <property type="match status" value="1"/>
</dbReference>
<dbReference type="FunFam" id="3.30.160.60:FF:000386">
    <property type="entry name" value="Tripartite motif-containing 5 (Predicted)"/>
    <property type="match status" value="1"/>
</dbReference>
<dbReference type="FunFam" id="3.30.40.10:FF:000144">
    <property type="entry name" value="Tripartite motif-containing 5 (Predicted)"/>
    <property type="match status" value="1"/>
</dbReference>
<dbReference type="Gene3D" id="2.60.120.920">
    <property type="match status" value="1"/>
</dbReference>
<dbReference type="Gene3D" id="3.30.160.60">
    <property type="entry name" value="Classic Zinc Finger"/>
    <property type="match status" value="1"/>
</dbReference>
<dbReference type="Gene3D" id="3.30.40.10">
    <property type="entry name" value="Zinc/RING finger domain, C3HC4 (zinc finger)"/>
    <property type="match status" value="1"/>
</dbReference>
<dbReference type="InterPro" id="IPR001870">
    <property type="entry name" value="B30.2/SPRY"/>
</dbReference>
<dbReference type="InterPro" id="IPR043136">
    <property type="entry name" value="B30.2/SPRY_sf"/>
</dbReference>
<dbReference type="InterPro" id="IPR003879">
    <property type="entry name" value="Butyrophylin_SPRY"/>
</dbReference>
<dbReference type="InterPro" id="IPR013320">
    <property type="entry name" value="ConA-like_dom_sf"/>
</dbReference>
<dbReference type="InterPro" id="IPR003877">
    <property type="entry name" value="SPRY_dom"/>
</dbReference>
<dbReference type="InterPro" id="IPR050143">
    <property type="entry name" value="TRIM/RBCC"/>
</dbReference>
<dbReference type="InterPro" id="IPR027370">
    <property type="entry name" value="Znf-RING_euk"/>
</dbReference>
<dbReference type="InterPro" id="IPR000315">
    <property type="entry name" value="Znf_B-box"/>
</dbReference>
<dbReference type="InterPro" id="IPR001841">
    <property type="entry name" value="Znf_RING"/>
</dbReference>
<dbReference type="InterPro" id="IPR013083">
    <property type="entry name" value="Znf_RING/FYVE/PHD"/>
</dbReference>
<dbReference type="InterPro" id="IPR017907">
    <property type="entry name" value="Znf_RING_CS"/>
</dbReference>
<dbReference type="PANTHER" id="PTHR24103">
    <property type="entry name" value="E3 UBIQUITIN-PROTEIN LIGASE TRIM"/>
    <property type="match status" value="1"/>
</dbReference>
<dbReference type="Pfam" id="PF00622">
    <property type="entry name" value="SPRY"/>
    <property type="match status" value="1"/>
</dbReference>
<dbReference type="Pfam" id="PF00643">
    <property type="entry name" value="zf-B_box"/>
    <property type="match status" value="1"/>
</dbReference>
<dbReference type="Pfam" id="PF13445">
    <property type="entry name" value="zf-RING_UBOX"/>
    <property type="match status" value="1"/>
</dbReference>
<dbReference type="PRINTS" id="PR01407">
    <property type="entry name" value="BUTYPHLNCDUF"/>
</dbReference>
<dbReference type="SMART" id="SM00336">
    <property type="entry name" value="BBOX"/>
    <property type="match status" value="1"/>
</dbReference>
<dbReference type="SMART" id="SM00184">
    <property type="entry name" value="RING"/>
    <property type="match status" value="1"/>
</dbReference>
<dbReference type="SMART" id="SM00449">
    <property type="entry name" value="SPRY"/>
    <property type="match status" value="1"/>
</dbReference>
<dbReference type="SUPFAM" id="SSF57845">
    <property type="entry name" value="B-box zinc-binding domain"/>
    <property type="match status" value="1"/>
</dbReference>
<dbReference type="SUPFAM" id="SSF49899">
    <property type="entry name" value="Concanavalin A-like lectins/glucanases"/>
    <property type="match status" value="1"/>
</dbReference>
<dbReference type="SUPFAM" id="SSF57850">
    <property type="entry name" value="RING/U-box"/>
    <property type="match status" value="1"/>
</dbReference>
<dbReference type="PROSITE" id="PS50188">
    <property type="entry name" value="B302_SPRY"/>
    <property type="match status" value="1"/>
</dbReference>
<dbReference type="PROSITE" id="PS50119">
    <property type="entry name" value="ZF_BBOX"/>
    <property type="match status" value="1"/>
</dbReference>
<dbReference type="PROSITE" id="PS00518">
    <property type="entry name" value="ZF_RING_1"/>
    <property type="match status" value="1"/>
</dbReference>
<dbReference type="PROSITE" id="PS50089">
    <property type="entry name" value="ZF_RING_2"/>
    <property type="match status" value="1"/>
</dbReference>
<evidence type="ECO:0000250" key="1"/>
<evidence type="ECO:0000250" key="2">
    <source>
        <dbReference type="UniProtKB" id="Q0PF16"/>
    </source>
</evidence>
<evidence type="ECO:0000250" key="3">
    <source>
        <dbReference type="UniProtKB" id="Q9C035"/>
    </source>
</evidence>
<evidence type="ECO:0000255" key="4"/>
<evidence type="ECO:0000255" key="5">
    <source>
        <dbReference type="PROSITE-ProRule" id="PRU00024"/>
    </source>
</evidence>
<evidence type="ECO:0000255" key="6">
    <source>
        <dbReference type="PROSITE-ProRule" id="PRU00175"/>
    </source>
</evidence>
<evidence type="ECO:0000255" key="7">
    <source>
        <dbReference type="PROSITE-ProRule" id="PRU00548"/>
    </source>
</evidence>
<evidence type="ECO:0000305" key="8"/>
<sequence length="494" mass="56980">MASRILMNIKEEVTCPICLELLTEPLSLDCGHSFCQACITANHKKSMLHQGERSCPLCRISYPSENLRPNRHLANIVERLREVMLSPEEGQKVDHCARHGEKLLLFCQQDGNVICWLCERSQEHRGHHTLLVEEVAQTYRENLQVALETMRQKQQDAEKLEADVREEQASWKIQIRDDKTNIMAEFKQLRDILDCEESNELQILEKEEKNILKRLTQSENDMVLQTQSMGVLISDLEHRLQGSVMELLQGVDEVIKRVKNVTLQKPKTFLNEKRRVFRAPDLKGMLQVFKELTEVQRYWVHVTLVPSHLSCAVISEDERQVRYQERIHQSFGKVKYFYGVLGSPSIRSGKHYWEVDVSNKSAWILGVCVSLKCTANRNGPRIENYQPKNGYWVIGLWNAGNYSAFQDSVKYSDFQDGSHSATYGPLIVPLFMTICPNRVGVFLDYEACTVSFFNVTSNGFLIYKFSNCRFSDSVFPYFSPMTCELPMTLCSPRS</sequence>
<accession>Q5D7I2</accession>
<name>TRIM5_PITPI</name>
<organism>
    <name type="scientific">Pithecia pithecia</name>
    <name type="common">White-faced saki</name>
    <dbReference type="NCBI Taxonomy" id="43777"/>
    <lineage>
        <taxon>Eukaryota</taxon>
        <taxon>Metazoa</taxon>
        <taxon>Chordata</taxon>
        <taxon>Craniata</taxon>
        <taxon>Vertebrata</taxon>
        <taxon>Euteleostomi</taxon>
        <taxon>Mammalia</taxon>
        <taxon>Eutheria</taxon>
        <taxon>Euarchontoglires</taxon>
        <taxon>Primates</taxon>
        <taxon>Haplorrhini</taxon>
        <taxon>Platyrrhini</taxon>
        <taxon>Pitheciidae</taxon>
        <taxon>Pitheciinae</taxon>
        <taxon>Pithecia</taxon>
    </lineage>
</organism>
<feature type="initiator methionine" description="Removed" evidence="3">
    <location>
        <position position="1"/>
    </location>
</feature>
<feature type="chain" id="PRO_0000273470" description="Tripartite motif-containing protein 5">
    <location>
        <begin position="2"/>
        <end position="494"/>
    </location>
</feature>
<feature type="domain" description="B30.2/SPRY" evidence="7">
    <location>
        <begin position="280"/>
        <end position="494"/>
    </location>
</feature>
<feature type="zinc finger region" description="RING-type" evidence="6">
    <location>
        <begin position="15"/>
        <end position="59"/>
    </location>
</feature>
<feature type="zinc finger region" description="B box-type" evidence="5">
    <location>
        <begin position="91"/>
        <end position="132"/>
    </location>
</feature>
<feature type="region of interest" description="Required for interaction with GABARAP and for autophagy" evidence="2">
    <location>
        <begin position="186"/>
        <end position="199"/>
    </location>
</feature>
<feature type="coiled-coil region" evidence="4">
    <location>
        <begin position="132"/>
        <end position="222"/>
    </location>
</feature>
<feature type="binding site" evidence="5">
    <location>
        <position position="96"/>
    </location>
    <ligand>
        <name>Zn(2+)</name>
        <dbReference type="ChEBI" id="CHEBI:29105"/>
    </ligand>
</feature>
<feature type="binding site" evidence="5">
    <location>
        <position position="99"/>
    </location>
    <ligand>
        <name>Zn(2+)</name>
        <dbReference type="ChEBI" id="CHEBI:29105"/>
    </ligand>
</feature>
<feature type="binding site" evidence="5">
    <location>
        <position position="118"/>
    </location>
    <ligand>
        <name>Zn(2+)</name>
        <dbReference type="ChEBI" id="CHEBI:29105"/>
    </ligand>
</feature>
<feature type="binding site" evidence="5">
    <location>
        <position position="124"/>
    </location>
    <ligand>
        <name>Zn(2+)</name>
        <dbReference type="ChEBI" id="CHEBI:29105"/>
    </ligand>
</feature>
<feature type="modified residue" description="N-acetylalanine" evidence="3">
    <location>
        <position position="2"/>
    </location>
</feature>
<feature type="modified residue" description="Phosphoserine" evidence="3">
    <location>
        <position position="86"/>
    </location>
</feature>
<proteinExistence type="inferred from homology"/>
<keyword id="KW-0007">Acetylation</keyword>
<keyword id="KW-0051">Antiviral defense</keyword>
<keyword id="KW-0072">Autophagy</keyword>
<keyword id="KW-0175">Coiled coil</keyword>
<keyword id="KW-0963">Cytoplasm</keyword>
<keyword id="KW-0391">Immunity</keyword>
<keyword id="KW-0399">Innate immunity</keyword>
<keyword id="KW-0479">Metal-binding</keyword>
<keyword id="KW-0539">Nucleus</keyword>
<keyword id="KW-0597">Phosphoprotein</keyword>
<keyword id="KW-0808">Transferase</keyword>
<keyword id="KW-0832">Ubl conjugation</keyword>
<keyword id="KW-0833">Ubl conjugation pathway</keyword>
<keyword id="KW-0862">Zinc</keyword>
<keyword id="KW-0863">Zinc-finger</keyword>
<protein>
    <recommendedName>
        <fullName>Tripartite motif-containing protein 5</fullName>
        <ecNumber>2.3.2.27</ecNumber>
    </recommendedName>
    <alternativeName>
        <fullName evidence="8">RING-type E3 ubiquitin transferase TRIM5</fullName>
    </alternativeName>
    <alternativeName>
        <fullName>TRIM5alpha</fullName>
    </alternativeName>
</protein>
<comment type="function">
    <text evidence="3">Capsid-specific restriction factor that prevents infection from non-host-adapted retroviruses. Blocks viral replication early in the life cycle, after viral entry but before reverse transcription. In addition to acting as a capsid-specific restriction factor, also acts as a pattern recognition receptor that activates innate immune signaling in response to the retroviral capsid lattice. Binding to the viral capsid triggers its E3 ubiquitin ligase activity, and in concert with the heterodimeric ubiquitin conjugating enzyme complex UBE2V1-UBE2N (also known as UBC13-UEV1A complex) generates 'Lys-63'-linked polyubiquitin chains, which in turn are catalysts in the autophosphorylation of the MAP3K7/TAK1 complex (includes TAK1, TAB2, and TAB3). Activation of the MAP3K7/TAK1 complex by autophosphorylation results in the induction and expression of NF-kappa-B and MAPK-responsive inflammatory genes, thereby leading to an innate immune response in the infected cell. Plays a role in regulating autophagy through activation of autophagy regulator BECN1 by causing its dissociation from its inhibitors BCL2 and TAB2.</text>
</comment>
<comment type="catalytic activity">
    <reaction>
        <text>S-ubiquitinyl-[E2 ubiquitin-conjugating enzyme]-L-cysteine + [acceptor protein]-L-lysine = [E2 ubiquitin-conjugating enzyme]-L-cysteine + N(6)-ubiquitinyl-[acceptor protein]-L-lysine.</text>
        <dbReference type="EC" id="2.3.2.27"/>
    </reaction>
</comment>
<comment type="pathway">
    <text>Protein modification; protein ubiquitination.</text>
</comment>
<comment type="subunit">
    <text evidence="2 3">Can form homodimers and homotrimers. In addition to lower-order dimerization, also exhibits a higher-order multimerization and both low- and high-order multimerizations are essential for its restriction activity. Interacts with BTBD1 and BTBD2. Interacts with PSMC4, PSMC5, PSMD7 and HSPA8/HSC70. Interacts (via B30.2/SPRY domain) with HSPA1A/B. Interacts with PSMC2, MAP3K7/TAK1, TAB2 and TAB3. Interacts with SQSTM1. Interacts with TRIM6 and TRIM34. Interacts with ULK1 (phosphorylated form), GABARAP, GABARAPL1, GABARAPL2, MAP1LC3A, MAP1LC3C and BECN1.</text>
</comment>
<comment type="subcellular location">
    <subcellularLocation>
        <location evidence="2">Cytoplasm</location>
    </subcellularLocation>
    <subcellularLocation>
        <location evidence="2">Nucleus</location>
    </subcellularLocation>
    <text evidence="2">Predominantly localizes in cytoplasmic bodies. Localization may be influenced by the coexpression of other TRIM proteins, hence partial nuclear localization is observed in the presence of TRIM22 or TRIM27. In cytoplasmic bodies, colocalizes with proteasomal subunits and SQSTM1.</text>
</comment>
<comment type="domain">
    <text evidence="2 3">The B box-type zinc finger domain and the coiled-coil domain contribute to the higher and low order multimerization respectively which is essential for restriction activity. The coiled coil domain is important for higher order multimerization by promoting the initial dimerization.</text>
</comment>
<comment type="domain">
    <text evidence="1">The B30.2/SPRY domain acts as a capsid recognition domain. Polymorphisms in this domain explain the observed species-specific differences among orthologs (By similarity).</text>
</comment>
<comment type="domain">
    <text evidence="1">The RING-type zinc finger domain confers E3 ubiquitin ligase activity and is essential for retrovirus restriction activity, autoubiquitination and higher-order multimerization.</text>
</comment>
<comment type="PTM">
    <text evidence="1">Degraded in a proteasome-independent fashion in the absence of viral infection but in a proteasome-dependent fashion following exposure to restriction sensitive virus.</text>
</comment>
<comment type="PTM">
    <text evidence="1">Autoubiquitinated in a RING finger- and UBE2D2-dependent manner. Monoubiquitinated by TRIM21. Deubiquitinated by Yersinia YopJ. Ubiquitination may not lead to proteasomal degradation (By similarity).</text>
</comment>
<comment type="similarity">
    <text evidence="8">Belongs to the TRIM/RBCC family.</text>
</comment>
<reference key="1">
    <citation type="journal article" date="2005" name="Proc. Natl. Acad. Sci. U.S.A.">
        <title>Positive selection of primate TRIM5alpha identifies a critical species-specific retroviral restriction domain.</title>
        <authorList>
            <person name="Sawyer S.L."/>
            <person name="Wu L.I."/>
            <person name="Emerman M."/>
            <person name="Malik H.S."/>
        </authorList>
    </citation>
    <scope>NUCLEOTIDE SEQUENCE [GENOMIC DNA]</scope>
</reference>
<gene>
    <name type="primary">TRIM5</name>
</gene>